<dbReference type="EC" id="2.7.2.3" evidence="1"/>
<dbReference type="EMBL" id="CP001283">
    <property type="protein sequence ID" value="ACK87569.1"/>
    <property type="molecule type" value="Genomic_DNA"/>
</dbReference>
<dbReference type="RefSeq" id="WP_001036338.1">
    <property type="nucleotide sequence ID" value="NC_011773.1"/>
</dbReference>
<dbReference type="KEGG" id="bcu:BCAH820_5223"/>
<dbReference type="HOGENOM" id="CLU_025427_0_2_9"/>
<dbReference type="UniPathway" id="UPA00109">
    <property type="reaction ID" value="UER00185"/>
</dbReference>
<dbReference type="Proteomes" id="UP000001363">
    <property type="component" value="Chromosome"/>
</dbReference>
<dbReference type="GO" id="GO:0005829">
    <property type="term" value="C:cytosol"/>
    <property type="evidence" value="ECO:0007669"/>
    <property type="project" value="TreeGrafter"/>
</dbReference>
<dbReference type="GO" id="GO:0043531">
    <property type="term" value="F:ADP binding"/>
    <property type="evidence" value="ECO:0007669"/>
    <property type="project" value="TreeGrafter"/>
</dbReference>
<dbReference type="GO" id="GO:0005524">
    <property type="term" value="F:ATP binding"/>
    <property type="evidence" value="ECO:0007669"/>
    <property type="project" value="UniProtKB-KW"/>
</dbReference>
<dbReference type="GO" id="GO:0004618">
    <property type="term" value="F:phosphoglycerate kinase activity"/>
    <property type="evidence" value="ECO:0007669"/>
    <property type="project" value="UniProtKB-UniRule"/>
</dbReference>
<dbReference type="GO" id="GO:0006094">
    <property type="term" value="P:gluconeogenesis"/>
    <property type="evidence" value="ECO:0007669"/>
    <property type="project" value="TreeGrafter"/>
</dbReference>
<dbReference type="GO" id="GO:0006096">
    <property type="term" value="P:glycolytic process"/>
    <property type="evidence" value="ECO:0007669"/>
    <property type="project" value="UniProtKB-UniRule"/>
</dbReference>
<dbReference type="CDD" id="cd00318">
    <property type="entry name" value="Phosphoglycerate_kinase"/>
    <property type="match status" value="1"/>
</dbReference>
<dbReference type="FunFam" id="3.40.50.1260:FF:000001">
    <property type="entry name" value="Phosphoglycerate kinase"/>
    <property type="match status" value="1"/>
</dbReference>
<dbReference type="FunFam" id="3.40.50.1260:FF:000002">
    <property type="entry name" value="Phosphoglycerate kinase"/>
    <property type="match status" value="1"/>
</dbReference>
<dbReference type="Gene3D" id="3.40.50.1260">
    <property type="entry name" value="Phosphoglycerate kinase, N-terminal domain"/>
    <property type="match status" value="2"/>
</dbReference>
<dbReference type="HAMAP" id="MF_00145">
    <property type="entry name" value="Phosphoglyc_kinase"/>
    <property type="match status" value="1"/>
</dbReference>
<dbReference type="InterPro" id="IPR001576">
    <property type="entry name" value="Phosphoglycerate_kinase"/>
</dbReference>
<dbReference type="InterPro" id="IPR015911">
    <property type="entry name" value="Phosphoglycerate_kinase_CS"/>
</dbReference>
<dbReference type="InterPro" id="IPR015824">
    <property type="entry name" value="Phosphoglycerate_kinase_N"/>
</dbReference>
<dbReference type="InterPro" id="IPR036043">
    <property type="entry name" value="Phosphoglycerate_kinase_sf"/>
</dbReference>
<dbReference type="PANTHER" id="PTHR11406">
    <property type="entry name" value="PHOSPHOGLYCERATE KINASE"/>
    <property type="match status" value="1"/>
</dbReference>
<dbReference type="PANTHER" id="PTHR11406:SF23">
    <property type="entry name" value="PHOSPHOGLYCERATE KINASE 1, CHLOROPLASTIC-RELATED"/>
    <property type="match status" value="1"/>
</dbReference>
<dbReference type="Pfam" id="PF00162">
    <property type="entry name" value="PGK"/>
    <property type="match status" value="1"/>
</dbReference>
<dbReference type="PIRSF" id="PIRSF000724">
    <property type="entry name" value="Pgk"/>
    <property type="match status" value="1"/>
</dbReference>
<dbReference type="PRINTS" id="PR00477">
    <property type="entry name" value="PHGLYCKINASE"/>
</dbReference>
<dbReference type="SUPFAM" id="SSF53748">
    <property type="entry name" value="Phosphoglycerate kinase"/>
    <property type="match status" value="1"/>
</dbReference>
<dbReference type="PROSITE" id="PS00111">
    <property type="entry name" value="PGLYCERATE_KINASE"/>
    <property type="match status" value="1"/>
</dbReference>
<reference key="1">
    <citation type="submission" date="2008-10" db="EMBL/GenBank/DDBJ databases">
        <title>Genome sequence of Bacillus cereus AH820.</title>
        <authorList>
            <person name="Dodson R.J."/>
            <person name="Durkin A.S."/>
            <person name="Rosovitz M.J."/>
            <person name="Rasko D.A."/>
            <person name="Hoffmaster A."/>
            <person name="Ravel J."/>
            <person name="Sutton G."/>
        </authorList>
    </citation>
    <scope>NUCLEOTIDE SEQUENCE [LARGE SCALE GENOMIC DNA]</scope>
    <source>
        <strain>AH820</strain>
    </source>
</reference>
<name>PGK_BACC0</name>
<protein>
    <recommendedName>
        <fullName evidence="1">Phosphoglycerate kinase</fullName>
        <ecNumber evidence="1">2.7.2.3</ecNumber>
    </recommendedName>
</protein>
<feature type="chain" id="PRO_1000192798" description="Phosphoglycerate kinase">
    <location>
        <begin position="1"/>
        <end position="394"/>
    </location>
</feature>
<feature type="binding site" evidence="1">
    <location>
        <begin position="21"/>
        <end position="23"/>
    </location>
    <ligand>
        <name>substrate</name>
    </ligand>
</feature>
<feature type="binding site" evidence="1">
    <location>
        <position position="36"/>
    </location>
    <ligand>
        <name>substrate</name>
    </ligand>
</feature>
<feature type="binding site" evidence="1">
    <location>
        <begin position="59"/>
        <end position="62"/>
    </location>
    <ligand>
        <name>substrate</name>
    </ligand>
</feature>
<feature type="binding site" evidence="1">
    <location>
        <position position="118"/>
    </location>
    <ligand>
        <name>substrate</name>
    </ligand>
</feature>
<feature type="binding site" evidence="1">
    <location>
        <position position="151"/>
    </location>
    <ligand>
        <name>substrate</name>
    </ligand>
</feature>
<feature type="binding site" evidence="1">
    <location>
        <position position="201"/>
    </location>
    <ligand>
        <name>ATP</name>
        <dbReference type="ChEBI" id="CHEBI:30616"/>
    </ligand>
</feature>
<feature type="binding site" evidence="1">
    <location>
        <position position="292"/>
    </location>
    <ligand>
        <name>ATP</name>
        <dbReference type="ChEBI" id="CHEBI:30616"/>
    </ligand>
</feature>
<feature type="binding site" evidence="1">
    <location>
        <position position="323"/>
    </location>
    <ligand>
        <name>ATP</name>
        <dbReference type="ChEBI" id="CHEBI:30616"/>
    </ligand>
</feature>
<feature type="binding site" evidence="1">
    <location>
        <begin position="350"/>
        <end position="353"/>
    </location>
    <ligand>
        <name>ATP</name>
        <dbReference type="ChEBI" id="CHEBI:30616"/>
    </ligand>
</feature>
<feature type="modified residue" description="Phosphoserine" evidence="1">
    <location>
        <position position="183"/>
    </location>
</feature>
<feature type="modified residue" description="Phosphothreonine" evidence="1">
    <location>
        <position position="299"/>
    </location>
</feature>
<organism>
    <name type="scientific">Bacillus cereus (strain AH820)</name>
    <dbReference type="NCBI Taxonomy" id="405535"/>
    <lineage>
        <taxon>Bacteria</taxon>
        <taxon>Bacillati</taxon>
        <taxon>Bacillota</taxon>
        <taxon>Bacilli</taxon>
        <taxon>Bacillales</taxon>
        <taxon>Bacillaceae</taxon>
        <taxon>Bacillus</taxon>
        <taxon>Bacillus cereus group</taxon>
    </lineage>
</organism>
<comment type="catalytic activity">
    <reaction evidence="1">
        <text>(2R)-3-phosphoglycerate + ATP = (2R)-3-phospho-glyceroyl phosphate + ADP</text>
        <dbReference type="Rhea" id="RHEA:14801"/>
        <dbReference type="ChEBI" id="CHEBI:30616"/>
        <dbReference type="ChEBI" id="CHEBI:57604"/>
        <dbReference type="ChEBI" id="CHEBI:58272"/>
        <dbReference type="ChEBI" id="CHEBI:456216"/>
        <dbReference type="EC" id="2.7.2.3"/>
    </reaction>
</comment>
<comment type="pathway">
    <text evidence="1">Carbohydrate degradation; glycolysis; pyruvate from D-glyceraldehyde 3-phosphate: step 2/5.</text>
</comment>
<comment type="subunit">
    <text evidence="1">Monomer.</text>
</comment>
<comment type="subcellular location">
    <subcellularLocation>
        <location evidence="1">Cytoplasm</location>
    </subcellularLocation>
</comment>
<comment type="similarity">
    <text evidence="1">Belongs to the phosphoglycerate kinase family.</text>
</comment>
<sequence length="394" mass="42284">MNKKSIRDVDLKGKRVFCRVDFNVPMKEGKITDETRIRAALPTIQYLVEQGAKVILASHLGRPKGQAVEELRLTPVAARLGELLGKDVKKADEAFGPVAQEMVAAMNEGDVLVLENVRFYAGEEKNDAELAKEFAALADIFVNDAFGAAHRAHASTAGIADYLPAVSGLLMEKELEVLGKALSNPERPFTAIIGGAKVKDKIGVIRHLLDKVDNLIIGGGLAYTFVKALGHEIGLSLCEDDKIELAKEFMQLAKEKGVNFYMPVDVVITEEFSETATTKIVGIDSIPSNWEGVDIGPKTREIYADVIKNSKLVVWNGPMGVFEMTPFAEGTKAVGQALADAEGTYSVIGGGDSAAAVEKFGMADKMSHISTGGGASLEFMEGKELPGVVCLNDK</sequence>
<accession>B7JFG6</accession>
<evidence type="ECO:0000255" key="1">
    <source>
        <dbReference type="HAMAP-Rule" id="MF_00145"/>
    </source>
</evidence>
<gene>
    <name evidence="1" type="primary">pgk</name>
    <name type="ordered locus">BCAH820_5223</name>
</gene>
<proteinExistence type="inferred from homology"/>
<keyword id="KW-0067">ATP-binding</keyword>
<keyword id="KW-0963">Cytoplasm</keyword>
<keyword id="KW-0324">Glycolysis</keyword>
<keyword id="KW-0418">Kinase</keyword>
<keyword id="KW-0547">Nucleotide-binding</keyword>
<keyword id="KW-0597">Phosphoprotein</keyword>
<keyword id="KW-0808">Transferase</keyword>